<reference key="1">
    <citation type="submission" date="2006-10" db="EMBL/GenBank/DDBJ databases">
        <title>Complete sequence of chromosome of Pelobacter propionicus DSM 2379.</title>
        <authorList>
            <consortium name="US DOE Joint Genome Institute"/>
            <person name="Copeland A."/>
            <person name="Lucas S."/>
            <person name="Lapidus A."/>
            <person name="Barry K."/>
            <person name="Detter J.C."/>
            <person name="Glavina del Rio T."/>
            <person name="Hammon N."/>
            <person name="Israni S."/>
            <person name="Dalin E."/>
            <person name="Tice H."/>
            <person name="Pitluck S."/>
            <person name="Saunders E."/>
            <person name="Brettin T."/>
            <person name="Bruce D."/>
            <person name="Han C."/>
            <person name="Tapia R."/>
            <person name="Schmutz J."/>
            <person name="Larimer F."/>
            <person name="Land M."/>
            <person name="Hauser L."/>
            <person name="Kyrpides N."/>
            <person name="Kim E."/>
            <person name="Lovley D."/>
            <person name="Richardson P."/>
        </authorList>
    </citation>
    <scope>NUCLEOTIDE SEQUENCE [LARGE SCALE GENOMIC DNA]</scope>
    <source>
        <strain>DSM 2379 / NBRC 103807 / OttBd1</strain>
    </source>
</reference>
<feature type="chain" id="PRO_1000084857" description="Ornithine carbamoyltransferase">
    <location>
        <begin position="1"/>
        <end position="305"/>
    </location>
</feature>
<feature type="binding site" evidence="2">
    <location>
        <begin position="52"/>
        <end position="55"/>
    </location>
    <ligand>
        <name>carbamoyl phosphate</name>
        <dbReference type="ChEBI" id="CHEBI:58228"/>
    </ligand>
</feature>
<feature type="binding site" evidence="2">
    <location>
        <position position="79"/>
    </location>
    <ligand>
        <name>carbamoyl phosphate</name>
        <dbReference type="ChEBI" id="CHEBI:58228"/>
    </ligand>
</feature>
<feature type="binding site" evidence="2">
    <location>
        <position position="103"/>
    </location>
    <ligand>
        <name>carbamoyl phosphate</name>
        <dbReference type="ChEBI" id="CHEBI:58228"/>
    </ligand>
</feature>
<feature type="binding site" evidence="2">
    <location>
        <begin position="130"/>
        <end position="133"/>
    </location>
    <ligand>
        <name>carbamoyl phosphate</name>
        <dbReference type="ChEBI" id="CHEBI:58228"/>
    </ligand>
</feature>
<feature type="binding site" evidence="2">
    <location>
        <position position="161"/>
    </location>
    <ligand>
        <name>L-ornithine</name>
        <dbReference type="ChEBI" id="CHEBI:46911"/>
    </ligand>
</feature>
<feature type="binding site" evidence="2">
    <location>
        <position position="222"/>
    </location>
    <ligand>
        <name>L-ornithine</name>
        <dbReference type="ChEBI" id="CHEBI:46911"/>
    </ligand>
</feature>
<feature type="binding site" evidence="2">
    <location>
        <begin position="226"/>
        <end position="227"/>
    </location>
    <ligand>
        <name>L-ornithine</name>
        <dbReference type="ChEBI" id="CHEBI:46911"/>
    </ligand>
</feature>
<feature type="binding site" evidence="2">
    <location>
        <begin position="262"/>
        <end position="263"/>
    </location>
    <ligand>
        <name>carbamoyl phosphate</name>
        <dbReference type="ChEBI" id="CHEBI:58228"/>
    </ligand>
</feature>
<feature type="binding site" evidence="2">
    <location>
        <position position="290"/>
    </location>
    <ligand>
        <name>carbamoyl phosphate</name>
        <dbReference type="ChEBI" id="CHEBI:58228"/>
    </ligand>
</feature>
<protein>
    <recommendedName>
        <fullName evidence="2">Ornithine carbamoyltransferase</fullName>
        <shortName evidence="2">OTCase</shortName>
        <ecNumber evidence="2">2.1.3.3</ecNumber>
    </recommendedName>
</protein>
<accession>A1ATU5</accession>
<comment type="function">
    <text evidence="1">Reversibly catalyzes the transfer of the carbamoyl group from carbamoyl phosphate (CP) to the N(epsilon) atom of ornithine (ORN) to produce L-citrulline.</text>
</comment>
<comment type="catalytic activity">
    <reaction evidence="2">
        <text>carbamoyl phosphate + L-ornithine = L-citrulline + phosphate + H(+)</text>
        <dbReference type="Rhea" id="RHEA:19513"/>
        <dbReference type="ChEBI" id="CHEBI:15378"/>
        <dbReference type="ChEBI" id="CHEBI:43474"/>
        <dbReference type="ChEBI" id="CHEBI:46911"/>
        <dbReference type="ChEBI" id="CHEBI:57743"/>
        <dbReference type="ChEBI" id="CHEBI:58228"/>
        <dbReference type="EC" id="2.1.3.3"/>
    </reaction>
</comment>
<comment type="pathway">
    <text evidence="2">Amino-acid biosynthesis; L-arginine biosynthesis; L-arginine from L-ornithine and carbamoyl phosphate: step 1/3.</text>
</comment>
<comment type="subcellular location">
    <subcellularLocation>
        <location evidence="2">Cytoplasm</location>
    </subcellularLocation>
</comment>
<comment type="similarity">
    <text evidence="2">Belongs to the aspartate/ornithine carbamoyltransferase superfamily. OTCase family.</text>
</comment>
<sequence>MARHFLSLHDYTKEELDRLLALAIELKQEQKQGGEHHLLKGKTLAMIFDKSSTRTRISFEVGIYQLGGHGLFISTGTSQMGRGEPLKDTARVLSRYCDGIMIRTFGQEIVDELAAYATVPVINGLTDLFHPCQIMADVMTVMEHKGGYAGLKFAWVGDGNNMANTWIEAAAIFGFDLALACPQGYEPDAKVMAWAAERAPGRVTLTADPKEAVSGAHVINTDVWASMGMEAEQKVREQAFGGFCLDDALAGLAHPDHIVLHCLPAHRGEEISDSVIEGSNSRVWDEAENRLHAQKAIMATLMGGE</sequence>
<evidence type="ECO:0000250" key="1"/>
<evidence type="ECO:0000255" key="2">
    <source>
        <dbReference type="HAMAP-Rule" id="MF_01109"/>
    </source>
</evidence>
<keyword id="KW-0028">Amino-acid biosynthesis</keyword>
<keyword id="KW-0055">Arginine biosynthesis</keyword>
<keyword id="KW-0963">Cytoplasm</keyword>
<keyword id="KW-1185">Reference proteome</keyword>
<keyword id="KW-0808">Transferase</keyword>
<organism>
    <name type="scientific">Pelobacter propionicus (strain DSM 2379 / NBRC 103807 / OttBd1)</name>
    <dbReference type="NCBI Taxonomy" id="338966"/>
    <lineage>
        <taxon>Bacteria</taxon>
        <taxon>Pseudomonadati</taxon>
        <taxon>Thermodesulfobacteriota</taxon>
        <taxon>Desulfuromonadia</taxon>
        <taxon>Desulfuromonadales</taxon>
        <taxon>Desulfuromonadaceae</taxon>
        <taxon>Pelobacter</taxon>
    </lineage>
</organism>
<gene>
    <name evidence="2" type="primary">argF</name>
    <name type="ordered locus">Ppro_3172</name>
</gene>
<dbReference type="EC" id="2.1.3.3" evidence="2"/>
<dbReference type="EMBL" id="CP000482">
    <property type="protein sequence ID" value="ABL00766.1"/>
    <property type="molecule type" value="Genomic_DNA"/>
</dbReference>
<dbReference type="RefSeq" id="WP_011736997.1">
    <property type="nucleotide sequence ID" value="NC_008609.1"/>
</dbReference>
<dbReference type="SMR" id="A1ATU5"/>
<dbReference type="STRING" id="338966.Ppro_3172"/>
<dbReference type="KEGG" id="ppd:Ppro_3172"/>
<dbReference type="eggNOG" id="COG0078">
    <property type="taxonomic scope" value="Bacteria"/>
</dbReference>
<dbReference type="HOGENOM" id="CLU_043846_3_2_7"/>
<dbReference type="OrthoDB" id="9802587at2"/>
<dbReference type="UniPathway" id="UPA00068">
    <property type="reaction ID" value="UER00112"/>
</dbReference>
<dbReference type="Proteomes" id="UP000006732">
    <property type="component" value="Chromosome"/>
</dbReference>
<dbReference type="GO" id="GO:0005737">
    <property type="term" value="C:cytoplasm"/>
    <property type="evidence" value="ECO:0007669"/>
    <property type="project" value="UniProtKB-SubCell"/>
</dbReference>
<dbReference type="GO" id="GO:0016597">
    <property type="term" value="F:amino acid binding"/>
    <property type="evidence" value="ECO:0007669"/>
    <property type="project" value="InterPro"/>
</dbReference>
<dbReference type="GO" id="GO:0004585">
    <property type="term" value="F:ornithine carbamoyltransferase activity"/>
    <property type="evidence" value="ECO:0007669"/>
    <property type="project" value="UniProtKB-UniRule"/>
</dbReference>
<dbReference type="GO" id="GO:0042450">
    <property type="term" value="P:arginine biosynthetic process via ornithine"/>
    <property type="evidence" value="ECO:0007669"/>
    <property type="project" value="TreeGrafter"/>
</dbReference>
<dbReference type="GO" id="GO:0019240">
    <property type="term" value="P:citrulline biosynthetic process"/>
    <property type="evidence" value="ECO:0007669"/>
    <property type="project" value="TreeGrafter"/>
</dbReference>
<dbReference type="GO" id="GO:0006526">
    <property type="term" value="P:L-arginine biosynthetic process"/>
    <property type="evidence" value="ECO:0007669"/>
    <property type="project" value="UniProtKB-UniRule"/>
</dbReference>
<dbReference type="FunFam" id="3.40.50.1370:FF:000008">
    <property type="entry name" value="Ornithine carbamoyltransferase"/>
    <property type="match status" value="1"/>
</dbReference>
<dbReference type="FunFam" id="3.40.50.1370:FF:000016">
    <property type="entry name" value="Ornithine carbamoyltransferase"/>
    <property type="match status" value="1"/>
</dbReference>
<dbReference type="Gene3D" id="3.40.50.1370">
    <property type="entry name" value="Aspartate/ornithine carbamoyltransferase"/>
    <property type="match status" value="2"/>
</dbReference>
<dbReference type="HAMAP" id="MF_01109">
    <property type="entry name" value="OTCase"/>
    <property type="match status" value="1"/>
</dbReference>
<dbReference type="InterPro" id="IPR006132">
    <property type="entry name" value="Asp/Orn_carbamoyltranf_P-bd"/>
</dbReference>
<dbReference type="InterPro" id="IPR006130">
    <property type="entry name" value="Asp/Orn_carbamoylTrfase"/>
</dbReference>
<dbReference type="InterPro" id="IPR036901">
    <property type="entry name" value="Asp/Orn_carbamoylTrfase_sf"/>
</dbReference>
<dbReference type="InterPro" id="IPR006131">
    <property type="entry name" value="Asp_carbamoyltransf_Asp/Orn-bd"/>
</dbReference>
<dbReference type="InterPro" id="IPR002292">
    <property type="entry name" value="Orn/put_carbamltrans"/>
</dbReference>
<dbReference type="InterPro" id="IPR024904">
    <property type="entry name" value="OTCase_ArgI"/>
</dbReference>
<dbReference type="NCBIfam" id="TIGR00658">
    <property type="entry name" value="orni_carb_tr"/>
    <property type="match status" value="1"/>
</dbReference>
<dbReference type="NCBIfam" id="NF001986">
    <property type="entry name" value="PRK00779.1"/>
    <property type="match status" value="1"/>
</dbReference>
<dbReference type="PANTHER" id="PTHR45753">
    <property type="entry name" value="ORNITHINE CARBAMOYLTRANSFERASE, MITOCHONDRIAL"/>
    <property type="match status" value="1"/>
</dbReference>
<dbReference type="PANTHER" id="PTHR45753:SF3">
    <property type="entry name" value="ORNITHINE TRANSCARBAMYLASE, MITOCHONDRIAL"/>
    <property type="match status" value="1"/>
</dbReference>
<dbReference type="Pfam" id="PF00185">
    <property type="entry name" value="OTCace"/>
    <property type="match status" value="1"/>
</dbReference>
<dbReference type="Pfam" id="PF02729">
    <property type="entry name" value="OTCace_N"/>
    <property type="match status" value="1"/>
</dbReference>
<dbReference type="PRINTS" id="PR00100">
    <property type="entry name" value="AOTCASE"/>
</dbReference>
<dbReference type="PRINTS" id="PR00102">
    <property type="entry name" value="OTCASE"/>
</dbReference>
<dbReference type="SUPFAM" id="SSF53671">
    <property type="entry name" value="Aspartate/ornithine carbamoyltransferase"/>
    <property type="match status" value="1"/>
</dbReference>
<dbReference type="PROSITE" id="PS00097">
    <property type="entry name" value="CARBAMOYLTRANSFERASE"/>
    <property type="match status" value="1"/>
</dbReference>
<proteinExistence type="inferred from homology"/>
<name>OTC_PELPD</name>